<name>ISPF_ACIB3</name>
<proteinExistence type="inferred from homology"/>
<reference key="1">
    <citation type="journal article" date="2008" name="J. Bacteriol.">
        <title>Comparative genome sequence analysis of multidrug-resistant Acinetobacter baumannii.</title>
        <authorList>
            <person name="Adams M.D."/>
            <person name="Goglin K."/>
            <person name="Molyneaux N."/>
            <person name="Hujer K.M."/>
            <person name="Lavender H."/>
            <person name="Jamison J.J."/>
            <person name="MacDonald I.J."/>
            <person name="Martin K.M."/>
            <person name="Russo T."/>
            <person name="Campagnari A.A."/>
            <person name="Hujer A.M."/>
            <person name="Bonomo R.A."/>
            <person name="Gill S.R."/>
        </authorList>
    </citation>
    <scope>NUCLEOTIDE SEQUENCE [LARGE SCALE GENOMIC DNA]</scope>
    <source>
        <strain>AB307-0294</strain>
    </source>
</reference>
<accession>B7H1F3</accession>
<gene>
    <name evidence="1" type="primary">ispF</name>
    <name type="ordered locus">ABBFA_001464</name>
</gene>
<organism>
    <name type="scientific">Acinetobacter baumannii (strain AB307-0294)</name>
    <dbReference type="NCBI Taxonomy" id="557600"/>
    <lineage>
        <taxon>Bacteria</taxon>
        <taxon>Pseudomonadati</taxon>
        <taxon>Pseudomonadota</taxon>
        <taxon>Gammaproteobacteria</taxon>
        <taxon>Moraxellales</taxon>
        <taxon>Moraxellaceae</taxon>
        <taxon>Acinetobacter</taxon>
        <taxon>Acinetobacter calcoaceticus/baumannii complex</taxon>
    </lineage>
</organism>
<comment type="function">
    <text evidence="1">Involved in the biosynthesis of isopentenyl diphosphate (IPP) and dimethylallyl diphosphate (DMAPP), two major building blocks of isoprenoid compounds. Catalyzes the conversion of 4-diphosphocytidyl-2-C-methyl-D-erythritol 2-phosphate (CDP-ME2P) to 2-C-methyl-D-erythritol 2,4-cyclodiphosphate (ME-CPP) with a corresponding release of cytidine 5-monophosphate (CMP).</text>
</comment>
<comment type="catalytic activity">
    <reaction evidence="1">
        <text>4-CDP-2-C-methyl-D-erythritol 2-phosphate = 2-C-methyl-D-erythritol 2,4-cyclic diphosphate + CMP</text>
        <dbReference type="Rhea" id="RHEA:23864"/>
        <dbReference type="ChEBI" id="CHEBI:57919"/>
        <dbReference type="ChEBI" id="CHEBI:58483"/>
        <dbReference type="ChEBI" id="CHEBI:60377"/>
        <dbReference type="EC" id="4.6.1.12"/>
    </reaction>
</comment>
<comment type="cofactor">
    <cofactor evidence="1">
        <name>a divalent metal cation</name>
        <dbReference type="ChEBI" id="CHEBI:60240"/>
    </cofactor>
    <text evidence="1">Binds 1 divalent metal cation per subunit.</text>
</comment>
<comment type="pathway">
    <text evidence="1">Isoprenoid biosynthesis; isopentenyl diphosphate biosynthesis via DXP pathway; isopentenyl diphosphate from 1-deoxy-D-xylulose 5-phosphate: step 4/6.</text>
</comment>
<comment type="subunit">
    <text evidence="1">Homotrimer.</text>
</comment>
<comment type="similarity">
    <text evidence="1">Belongs to the IspF family.</text>
</comment>
<evidence type="ECO:0000255" key="1">
    <source>
        <dbReference type="HAMAP-Rule" id="MF_00107"/>
    </source>
</evidence>
<sequence length="160" mass="17375">MVAQIRIGQGMDVHAFEEGNFVTLAGVQIPHTHGLKAHSDGDVVLHALCDALLGALALGDIGQHFPDTDPEFKGADSRVLLKHVYQLILDRGYHLNNADITVACERPKLAKYNLEMRQSIADVLNVDLNQISIKATTTEKLGFTGRQEGILATATVLISH</sequence>
<keyword id="KW-0414">Isoprene biosynthesis</keyword>
<keyword id="KW-0456">Lyase</keyword>
<keyword id="KW-0479">Metal-binding</keyword>
<dbReference type="EC" id="4.6.1.12" evidence="1"/>
<dbReference type="EMBL" id="CP001172">
    <property type="protein sequence ID" value="ACJ59227.1"/>
    <property type="molecule type" value="Genomic_DNA"/>
</dbReference>
<dbReference type="RefSeq" id="WP_000226512.1">
    <property type="nucleotide sequence ID" value="NZ_CP001172.1"/>
</dbReference>
<dbReference type="SMR" id="B7H1F3"/>
<dbReference type="GeneID" id="92894244"/>
<dbReference type="HOGENOM" id="CLU_084630_2_0_6"/>
<dbReference type="UniPathway" id="UPA00056">
    <property type="reaction ID" value="UER00095"/>
</dbReference>
<dbReference type="Proteomes" id="UP000006924">
    <property type="component" value="Chromosome"/>
</dbReference>
<dbReference type="GO" id="GO:0008685">
    <property type="term" value="F:2-C-methyl-D-erythritol 2,4-cyclodiphosphate synthase activity"/>
    <property type="evidence" value="ECO:0007669"/>
    <property type="project" value="UniProtKB-UniRule"/>
</dbReference>
<dbReference type="GO" id="GO:0046872">
    <property type="term" value="F:metal ion binding"/>
    <property type="evidence" value="ECO:0007669"/>
    <property type="project" value="UniProtKB-KW"/>
</dbReference>
<dbReference type="GO" id="GO:0019288">
    <property type="term" value="P:isopentenyl diphosphate biosynthetic process, methylerythritol 4-phosphate pathway"/>
    <property type="evidence" value="ECO:0007669"/>
    <property type="project" value="UniProtKB-UniRule"/>
</dbReference>
<dbReference type="GO" id="GO:0016114">
    <property type="term" value="P:terpenoid biosynthetic process"/>
    <property type="evidence" value="ECO:0007669"/>
    <property type="project" value="InterPro"/>
</dbReference>
<dbReference type="CDD" id="cd00554">
    <property type="entry name" value="MECDP_synthase"/>
    <property type="match status" value="1"/>
</dbReference>
<dbReference type="FunFam" id="3.30.1330.50:FF:000001">
    <property type="entry name" value="2-C-methyl-D-erythritol 2,4-cyclodiphosphate synthase"/>
    <property type="match status" value="1"/>
</dbReference>
<dbReference type="Gene3D" id="3.30.1330.50">
    <property type="entry name" value="2-C-methyl-D-erythritol 2,4-cyclodiphosphate synthase"/>
    <property type="match status" value="1"/>
</dbReference>
<dbReference type="HAMAP" id="MF_00107">
    <property type="entry name" value="IspF"/>
    <property type="match status" value="1"/>
</dbReference>
<dbReference type="InterPro" id="IPR003526">
    <property type="entry name" value="MECDP_synthase"/>
</dbReference>
<dbReference type="InterPro" id="IPR020555">
    <property type="entry name" value="MECDP_synthase_CS"/>
</dbReference>
<dbReference type="InterPro" id="IPR036571">
    <property type="entry name" value="MECDP_synthase_sf"/>
</dbReference>
<dbReference type="NCBIfam" id="TIGR00151">
    <property type="entry name" value="ispF"/>
    <property type="match status" value="1"/>
</dbReference>
<dbReference type="PANTHER" id="PTHR43181">
    <property type="entry name" value="2-C-METHYL-D-ERYTHRITOL 2,4-CYCLODIPHOSPHATE SYNTHASE, CHLOROPLASTIC"/>
    <property type="match status" value="1"/>
</dbReference>
<dbReference type="PANTHER" id="PTHR43181:SF1">
    <property type="entry name" value="2-C-METHYL-D-ERYTHRITOL 2,4-CYCLODIPHOSPHATE SYNTHASE, CHLOROPLASTIC"/>
    <property type="match status" value="1"/>
</dbReference>
<dbReference type="Pfam" id="PF02542">
    <property type="entry name" value="YgbB"/>
    <property type="match status" value="1"/>
</dbReference>
<dbReference type="SUPFAM" id="SSF69765">
    <property type="entry name" value="IpsF-like"/>
    <property type="match status" value="1"/>
</dbReference>
<dbReference type="PROSITE" id="PS01350">
    <property type="entry name" value="ISPF"/>
    <property type="match status" value="1"/>
</dbReference>
<feature type="chain" id="PRO_1000117414" description="2-C-methyl-D-erythritol 2,4-cyclodiphosphate synthase">
    <location>
        <begin position="1"/>
        <end position="160"/>
    </location>
</feature>
<feature type="binding site" evidence="1">
    <location>
        <begin position="12"/>
        <end position="14"/>
    </location>
    <ligand>
        <name>4-CDP-2-C-methyl-D-erythritol 2-phosphate</name>
        <dbReference type="ChEBI" id="CHEBI:57919"/>
    </ligand>
</feature>
<feature type="binding site" evidence="1">
    <location>
        <position position="12"/>
    </location>
    <ligand>
        <name>a divalent metal cation</name>
        <dbReference type="ChEBI" id="CHEBI:60240"/>
    </ligand>
</feature>
<feature type="binding site" evidence="1">
    <location>
        <position position="14"/>
    </location>
    <ligand>
        <name>a divalent metal cation</name>
        <dbReference type="ChEBI" id="CHEBI:60240"/>
    </ligand>
</feature>
<feature type="binding site" evidence="1">
    <location>
        <begin position="38"/>
        <end position="39"/>
    </location>
    <ligand>
        <name>4-CDP-2-C-methyl-D-erythritol 2-phosphate</name>
        <dbReference type="ChEBI" id="CHEBI:57919"/>
    </ligand>
</feature>
<feature type="binding site" evidence="1">
    <location>
        <position position="46"/>
    </location>
    <ligand>
        <name>a divalent metal cation</name>
        <dbReference type="ChEBI" id="CHEBI:60240"/>
    </ligand>
</feature>
<feature type="binding site" evidence="1">
    <location>
        <begin position="60"/>
        <end position="62"/>
    </location>
    <ligand>
        <name>4-CDP-2-C-methyl-D-erythritol 2-phosphate</name>
        <dbReference type="ChEBI" id="CHEBI:57919"/>
    </ligand>
</feature>
<feature type="binding site" evidence="1">
    <location>
        <begin position="65"/>
        <end position="69"/>
    </location>
    <ligand>
        <name>4-CDP-2-C-methyl-D-erythritol 2-phosphate</name>
        <dbReference type="ChEBI" id="CHEBI:57919"/>
    </ligand>
</feature>
<feature type="binding site" evidence="1">
    <location>
        <begin position="136"/>
        <end position="139"/>
    </location>
    <ligand>
        <name>4-CDP-2-C-methyl-D-erythritol 2-phosphate</name>
        <dbReference type="ChEBI" id="CHEBI:57919"/>
    </ligand>
</feature>
<feature type="binding site" evidence="1">
    <location>
        <position position="143"/>
    </location>
    <ligand>
        <name>4-CDP-2-C-methyl-D-erythritol 2-phosphate</name>
        <dbReference type="ChEBI" id="CHEBI:57919"/>
    </ligand>
</feature>
<feature type="binding site" evidence="1">
    <location>
        <position position="146"/>
    </location>
    <ligand>
        <name>4-CDP-2-C-methyl-D-erythritol 2-phosphate</name>
        <dbReference type="ChEBI" id="CHEBI:57919"/>
    </ligand>
</feature>
<feature type="site" description="Transition state stabilizer" evidence="1">
    <location>
        <position position="38"/>
    </location>
</feature>
<feature type="site" description="Transition state stabilizer" evidence="1">
    <location>
        <position position="137"/>
    </location>
</feature>
<protein>
    <recommendedName>
        <fullName evidence="1">2-C-methyl-D-erythritol 2,4-cyclodiphosphate synthase</fullName>
        <shortName evidence="1">MECDP-synthase</shortName>
        <shortName evidence="1">MECPP-synthase</shortName>
        <shortName evidence="1">MECPS</shortName>
        <ecNumber evidence="1">4.6.1.12</ecNumber>
    </recommendedName>
</protein>